<gene>
    <name evidence="1" type="primary">rpl18</name>
    <name type="ordered locus">Msed_0110</name>
</gene>
<dbReference type="EMBL" id="CP000682">
    <property type="protein sequence ID" value="ABP94287.1"/>
    <property type="molecule type" value="Genomic_DNA"/>
</dbReference>
<dbReference type="RefSeq" id="WP_011921256.1">
    <property type="nucleotide sequence ID" value="NC_009440.1"/>
</dbReference>
<dbReference type="SMR" id="A4YCY5"/>
<dbReference type="STRING" id="399549.Msed_0110"/>
<dbReference type="GeneID" id="91754546"/>
<dbReference type="KEGG" id="mse:Msed_0110"/>
<dbReference type="eggNOG" id="arCOG04088">
    <property type="taxonomic scope" value="Archaea"/>
</dbReference>
<dbReference type="HOGENOM" id="CLU_056222_2_0_2"/>
<dbReference type="Proteomes" id="UP000000242">
    <property type="component" value="Chromosome"/>
</dbReference>
<dbReference type="GO" id="GO:0022625">
    <property type="term" value="C:cytosolic large ribosomal subunit"/>
    <property type="evidence" value="ECO:0007669"/>
    <property type="project" value="TreeGrafter"/>
</dbReference>
<dbReference type="GO" id="GO:0008097">
    <property type="term" value="F:5S rRNA binding"/>
    <property type="evidence" value="ECO:0007669"/>
    <property type="project" value="InterPro"/>
</dbReference>
<dbReference type="GO" id="GO:0003735">
    <property type="term" value="F:structural constituent of ribosome"/>
    <property type="evidence" value="ECO:0007669"/>
    <property type="project" value="InterPro"/>
</dbReference>
<dbReference type="GO" id="GO:0000027">
    <property type="term" value="P:ribosomal large subunit assembly"/>
    <property type="evidence" value="ECO:0007669"/>
    <property type="project" value="TreeGrafter"/>
</dbReference>
<dbReference type="GO" id="GO:0006412">
    <property type="term" value="P:translation"/>
    <property type="evidence" value="ECO:0007669"/>
    <property type="project" value="UniProtKB-UniRule"/>
</dbReference>
<dbReference type="CDD" id="cd00432">
    <property type="entry name" value="Ribosomal_L18_L5e"/>
    <property type="match status" value="1"/>
</dbReference>
<dbReference type="Gene3D" id="3.30.420.100">
    <property type="match status" value="1"/>
</dbReference>
<dbReference type="HAMAP" id="MF_01337_A">
    <property type="entry name" value="Ribosomal_uL18_A"/>
    <property type="match status" value="1"/>
</dbReference>
<dbReference type="InterPro" id="IPR005485">
    <property type="entry name" value="Rbsml_uL18_euk"/>
</dbReference>
<dbReference type="NCBIfam" id="NF006342">
    <property type="entry name" value="PRK08569.1"/>
    <property type="match status" value="1"/>
</dbReference>
<dbReference type="PANTHER" id="PTHR23410:SF12">
    <property type="entry name" value="LARGE RIBOSOMAL SUBUNIT PROTEIN UL18"/>
    <property type="match status" value="1"/>
</dbReference>
<dbReference type="PANTHER" id="PTHR23410">
    <property type="entry name" value="RIBOSOMAL PROTEIN L5-RELATED"/>
    <property type="match status" value="1"/>
</dbReference>
<dbReference type="Pfam" id="PF17144">
    <property type="entry name" value="Ribosomal_L5e"/>
    <property type="match status" value="1"/>
</dbReference>
<dbReference type="SUPFAM" id="SSF53137">
    <property type="entry name" value="Translational machinery components"/>
    <property type="match status" value="1"/>
</dbReference>
<accession>A4YCY5</accession>
<comment type="function">
    <text evidence="1">This is one of the proteins that bind and probably mediate the attachment of the 5S RNA into the large ribosomal subunit, where it forms part of the central protuberance.</text>
</comment>
<comment type="subunit">
    <text evidence="1">Part of the 50S ribosomal subunit. Contacts the 5S and 23S rRNAs.</text>
</comment>
<comment type="similarity">
    <text evidence="1">Belongs to the universal ribosomal protein uL18 family.</text>
</comment>
<proteinExistence type="inferred from homology"/>
<reference key="1">
    <citation type="journal article" date="2008" name="Appl. Environ. Microbiol.">
        <title>The genome sequence of the metal-mobilizing, extremely thermoacidophilic archaeon Metallosphaera sedula provides insights into bioleaching-associated metabolism.</title>
        <authorList>
            <person name="Auernik K.S."/>
            <person name="Maezato Y."/>
            <person name="Blum P.H."/>
            <person name="Kelly R.M."/>
        </authorList>
    </citation>
    <scope>NUCLEOTIDE SEQUENCE [LARGE SCALE GENOMIC DNA]</scope>
    <source>
        <strain>ATCC 51363 / DSM 5348 / JCM 9185 / NBRC 15509 / TH2</strain>
    </source>
</reference>
<protein>
    <recommendedName>
        <fullName evidence="1">Large ribosomal subunit protein uL18</fullName>
    </recommendedName>
    <alternativeName>
        <fullName evidence="2">50S ribosomal protein L18</fullName>
    </alternativeName>
</protein>
<sequence>MAHGPNYKVKYRRRREGKTNYYRRYTYVLNRSDRVVVRLTNKYVIVQFVKFDPKGDITVAAAHSRELMKFGWKGDENNSTACYLTGYLAGLRAKKAGMTSASADLGLFTPTKGARIFYVLKGVIDSGVKVPMGDVGVNNDRLAGKHIAEYAKKLEQEDPDKYRGLFSRYLARGLDPKDLPAHFKEVLNSIKSGEK</sequence>
<feature type="chain" id="PRO_1000073307" description="Large ribosomal subunit protein uL18">
    <location>
        <begin position="1"/>
        <end position="195"/>
    </location>
</feature>
<organism>
    <name type="scientific">Metallosphaera sedula (strain ATCC 51363 / DSM 5348 / JCM 9185 / NBRC 15509 / TH2)</name>
    <dbReference type="NCBI Taxonomy" id="399549"/>
    <lineage>
        <taxon>Archaea</taxon>
        <taxon>Thermoproteota</taxon>
        <taxon>Thermoprotei</taxon>
        <taxon>Sulfolobales</taxon>
        <taxon>Sulfolobaceae</taxon>
        <taxon>Metallosphaera</taxon>
    </lineage>
</organism>
<keyword id="KW-1185">Reference proteome</keyword>
<keyword id="KW-0687">Ribonucleoprotein</keyword>
<keyword id="KW-0689">Ribosomal protein</keyword>
<keyword id="KW-0694">RNA-binding</keyword>
<keyword id="KW-0699">rRNA-binding</keyword>
<name>RL18_METS5</name>
<evidence type="ECO:0000255" key="1">
    <source>
        <dbReference type="HAMAP-Rule" id="MF_01337"/>
    </source>
</evidence>
<evidence type="ECO:0000305" key="2"/>